<evidence type="ECO:0000250" key="1"/>
<evidence type="ECO:0000255" key="2">
    <source>
        <dbReference type="HAMAP-Rule" id="MF_00062"/>
    </source>
</evidence>
<name>CYSN_SALHS</name>
<organism>
    <name type="scientific">Salmonella heidelberg (strain SL476)</name>
    <dbReference type="NCBI Taxonomy" id="454169"/>
    <lineage>
        <taxon>Bacteria</taxon>
        <taxon>Pseudomonadati</taxon>
        <taxon>Pseudomonadota</taxon>
        <taxon>Gammaproteobacteria</taxon>
        <taxon>Enterobacterales</taxon>
        <taxon>Enterobacteriaceae</taxon>
        <taxon>Salmonella</taxon>
    </lineage>
</organism>
<comment type="function">
    <text evidence="2">With CysD forms the ATP sulfurylase (ATPS) that catalyzes the adenylation of sulfate producing adenosine 5'-phosphosulfate (APS) and diphosphate, the first enzymatic step in sulfur assimilation pathway. APS synthesis involves the formation of a high-energy phosphoric-sulfuric acid anhydride bond driven by GTP hydrolysis by CysN coupled to ATP hydrolysis by CysD.</text>
</comment>
<comment type="catalytic activity">
    <reaction evidence="2">
        <text>sulfate + ATP + H(+) = adenosine 5'-phosphosulfate + diphosphate</text>
        <dbReference type="Rhea" id="RHEA:18133"/>
        <dbReference type="ChEBI" id="CHEBI:15378"/>
        <dbReference type="ChEBI" id="CHEBI:16189"/>
        <dbReference type="ChEBI" id="CHEBI:30616"/>
        <dbReference type="ChEBI" id="CHEBI:33019"/>
        <dbReference type="ChEBI" id="CHEBI:58243"/>
        <dbReference type="EC" id="2.7.7.4"/>
    </reaction>
</comment>
<comment type="pathway">
    <text evidence="2">Sulfur metabolism; hydrogen sulfide biosynthesis; sulfite from sulfate: step 1/3.</text>
</comment>
<comment type="subunit">
    <text evidence="2">Heterodimer composed of CysD, the smaller subunit, and CysN.</text>
</comment>
<comment type="similarity">
    <text evidence="2">Belongs to the TRAFAC class translation factor GTPase superfamily. Classic translation factor GTPase family. CysN/NodQ subfamily.</text>
</comment>
<keyword id="KW-0067">ATP-binding</keyword>
<keyword id="KW-0342">GTP-binding</keyword>
<keyword id="KW-0547">Nucleotide-binding</keyword>
<keyword id="KW-0548">Nucleotidyltransferase</keyword>
<keyword id="KW-0808">Transferase</keyword>
<reference key="1">
    <citation type="journal article" date="2011" name="J. Bacteriol.">
        <title>Comparative genomics of 28 Salmonella enterica isolates: evidence for CRISPR-mediated adaptive sublineage evolution.</title>
        <authorList>
            <person name="Fricke W.F."/>
            <person name="Mammel M.K."/>
            <person name="McDermott P.F."/>
            <person name="Tartera C."/>
            <person name="White D.G."/>
            <person name="Leclerc J.E."/>
            <person name="Ravel J."/>
            <person name="Cebula T.A."/>
        </authorList>
    </citation>
    <scope>NUCLEOTIDE SEQUENCE [LARGE SCALE GENOMIC DNA]</scope>
    <source>
        <strain>SL476</strain>
    </source>
</reference>
<proteinExistence type="inferred from homology"/>
<dbReference type="EC" id="2.7.7.4" evidence="2"/>
<dbReference type="EMBL" id="CP001120">
    <property type="protein sequence ID" value="ACF66884.1"/>
    <property type="molecule type" value="Genomic_DNA"/>
</dbReference>
<dbReference type="RefSeq" id="WP_001092252.1">
    <property type="nucleotide sequence ID" value="NC_011083.1"/>
</dbReference>
<dbReference type="SMR" id="B4TFX1"/>
<dbReference type="KEGG" id="seh:SeHA_C3124"/>
<dbReference type="HOGENOM" id="CLU_007265_5_2_6"/>
<dbReference type="UniPathway" id="UPA00140">
    <property type="reaction ID" value="UER00204"/>
</dbReference>
<dbReference type="Proteomes" id="UP000001866">
    <property type="component" value="Chromosome"/>
</dbReference>
<dbReference type="GO" id="GO:0005524">
    <property type="term" value="F:ATP binding"/>
    <property type="evidence" value="ECO:0007669"/>
    <property type="project" value="UniProtKB-KW"/>
</dbReference>
<dbReference type="GO" id="GO:0005525">
    <property type="term" value="F:GTP binding"/>
    <property type="evidence" value="ECO:0007669"/>
    <property type="project" value="UniProtKB-UniRule"/>
</dbReference>
<dbReference type="GO" id="GO:0003924">
    <property type="term" value="F:GTPase activity"/>
    <property type="evidence" value="ECO:0007669"/>
    <property type="project" value="InterPro"/>
</dbReference>
<dbReference type="GO" id="GO:0004781">
    <property type="term" value="F:sulfate adenylyltransferase (ATP) activity"/>
    <property type="evidence" value="ECO:0007669"/>
    <property type="project" value="UniProtKB-UniRule"/>
</dbReference>
<dbReference type="GO" id="GO:0070814">
    <property type="term" value="P:hydrogen sulfide biosynthetic process"/>
    <property type="evidence" value="ECO:0007669"/>
    <property type="project" value="UniProtKB-UniRule"/>
</dbReference>
<dbReference type="GO" id="GO:0000103">
    <property type="term" value="P:sulfate assimilation"/>
    <property type="evidence" value="ECO:0007669"/>
    <property type="project" value="UniProtKB-UniRule"/>
</dbReference>
<dbReference type="CDD" id="cd04166">
    <property type="entry name" value="CysN_ATPS"/>
    <property type="match status" value="1"/>
</dbReference>
<dbReference type="CDD" id="cd03695">
    <property type="entry name" value="CysN_NodQ_II"/>
    <property type="match status" value="1"/>
</dbReference>
<dbReference type="CDD" id="cd04095">
    <property type="entry name" value="CysN_NoDQ_III"/>
    <property type="match status" value="1"/>
</dbReference>
<dbReference type="FunFam" id="2.40.30.10:FF:000027">
    <property type="entry name" value="Sulfate adenylyltransferase subunit 1"/>
    <property type="match status" value="1"/>
</dbReference>
<dbReference type="FunFam" id="2.40.30.10:FF:000031">
    <property type="entry name" value="Sulfate adenylyltransferase subunit 1"/>
    <property type="match status" value="1"/>
</dbReference>
<dbReference type="FunFam" id="3.40.50.300:FF:000119">
    <property type="entry name" value="Sulfate adenylyltransferase subunit 1"/>
    <property type="match status" value="1"/>
</dbReference>
<dbReference type="Gene3D" id="3.40.50.300">
    <property type="entry name" value="P-loop containing nucleotide triphosphate hydrolases"/>
    <property type="match status" value="1"/>
</dbReference>
<dbReference type="Gene3D" id="2.40.30.10">
    <property type="entry name" value="Translation factors"/>
    <property type="match status" value="2"/>
</dbReference>
<dbReference type="HAMAP" id="MF_00062">
    <property type="entry name" value="Sulf_adenylyltr_sub1"/>
    <property type="match status" value="1"/>
</dbReference>
<dbReference type="InterPro" id="IPR041757">
    <property type="entry name" value="CysN_GTP-bd"/>
</dbReference>
<dbReference type="InterPro" id="IPR044138">
    <property type="entry name" value="CysN_II"/>
</dbReference>
<dbReference type="InterPro" id="IPR044139">
    <property type="entry name" value="CysN_NoDQ_III"/>
</dbReference>
<dbReference type="InterPro" id="IPR031157">
    <property type="entry name" value="G_TR_CS"/>
</dbReference>
<dbReference type="InterPro" id="IPR054696">
    <property type="entry name" value="GTP-eEF1A_C"/>
</dbReference>
<dbReference type="InterPro" id="IPR027417">
    <property type="entry name" value="P-loop_NTPase"/>
</dbReference>
<dbReference type="InterPro" id="IPR005225">
    <property type="entry name" value="Small_GTP-bd"/>
</dbReference>
<dbReference type="InterPro" id="IPR011779">
    <property type="entry name" value="SO4_adenylTrfase_lsu"/>
</dbReference>
<dbReference type="InterPro" id="IPR000795">
    <property type="entry name" value="T_Tr_GTP-bd_dom"/>
</dbReference>
<dbReference type="InterPro" id="IPR050100">
    <property type="entry name" value="TRAFAC_GTPase_members"/>
</dbReference>
<dbReference type="InterPro" id="IPR009000">
    <property type="entry name" value="Transl_B-barrel_sf"/>
</dbReference>
<dbReference type="InterPro" id="IPR009001">
    <property type="entry name" value="Transl_elong_EF1A/Init_IF2_C"/>
</dbReference>
<dbReference type="NCBIfam" id="TIGR02034">
    <property type="entry name" value="CysN"/>
    <property type="match status" value="1"/>
</dbReference>
<dbReference type="NCBIfam" id="NF003478">
    <property type="entry name" value="PRK05124.1"/>
    <property type="match status" value="1"/>
</dbReference>
<dbReference type="NCBIfam" id="TIGR00231">
    <property type="entry name" value="small_GTP"/>
    <property type="match status" value="1"/>
</dbReference>
<dbReference type="PANTHER" id="PTHR23115">
    <property type="entry name" value="TRANSLATION FACTOR"/>
    <property type="match status" value="1"/>
</dbReference>
<dbReference type="Pfam" id="PF22594">
    <property type="entry name" value="GTP-eEF1A_C"/>
    <property type="match status" value="1"/>
</dbReference>
<dbReference type="Pfam" id="PF00009">
    <property type="entry name" value="GTP_EFTU"/>
    <property type="match status" value="1"/>
</dbReference>
<dbReference type="PRINTS" id="PR00315">
    <property type="entry name" value="ELONGATNFCT"/>
</dbReference>
<dbReference type="SUPFAM" id="SSF50465">
    <property type="entry name" value="EF-Tu/eEF-1alpha/eIF2-gamma C-terminal domain"/>
    <property type="match status" value="1"/>
</dbReference>
<dbReference type="SUPFAM" id="SSF52540">
    <property type="entry name" value="P-loop containing nucleoside triphosphate hydrolases"/>
    <property type="match status" value="1"/>
</dbReference>
<dbReference type="SUPFAM" id="SSF50447">
    <property type="entry name" value="Translation proteins"/>
    <property type="match status" value="1"/>
</dbReference>
<dbReference type="PROSITE" id="PS00301">
    <property type="entry name" value="G_TR_1"/>
    <property type="match status" value="1"/>
</dbReference>
<dbReference type="PROSITE" id="PS51722">
    <property type="entry name" value="G_TR_2"/>
    <property type="match status" value="1"/>
</dbReference>
<accession>B4TFX1</accession>
<gene>
    <name evidence="2" type="primary">cysN</name>
    <name type="ordered locus">SeHA_C3124</name>
</gene>
<feature type="chain" id="PRO_1000092155" description="Sulfate adenylyltransferase subunit 1">
    <location>
        <begin position="1"/>
        <end position="479"/>
    </location>
</feature>
<feature type="domain" description="tr-type G">
    <location>
        <begin position="25"/>
        <end position="239"/>
    </location>
</feature>
<feature type="region of interest" description="G1" evidence="1">
    <location>
        <begin position="34"/>
        <end position="41"/>
    </location>
</feature>
<feature type="region of interest" description="G2" evidence="1">
    <location>
        <begin position="92"/>
        <end position="96"/>
    </location>
</feature>
<feature type="region of interest" description="G3" evidence="1">
    <location>
        <begin position="113"/>
        <end position="116"/>
    </location>
</feature>
<feature type="region of interest" description="G4" evidence="1">
    <location>
        <begin position="168"/>
        <end position="171"/>
    </location>
</feature>
<feature type="region of interest" description="G5" evidence="1">
    <location>
        <begin position="206"/>
        <end position="208"/>
    </location>
</feature>
<feature type="binding site" evidence="2">
    <location>
        <begin position="34"/>
        <end position="41"/>
    </location>
    <ligand>
        <name>GTP</name>
        <dbReference type="ChEBI" id="CHEBI:37565"/>
    </ligand>
</feature>
<feature type="binding site" evidence="2">
    <location>
        <begin position="113"/>
        <end position="117"/>
    </location>
    <ligand>
        <name>GTP</name>
        <dbReference type="ChEBI" id="CHEBI:37565"/>
    </ligand>
</feature>
<feature type="binding site" evidence="2">
    <location>
        <begin position="168"/>
        <end position="171"/>
    </location>
    <ligand>
        <name>GTP</name>
        <dbReference type="ChEBI" id="CHEBI:37565"/>
    </ligand>
</feature>
<sequence length="479" mass="53071">MNTILAQQIANEGGVEAWMIAQQHKSLLRFLTCGSVDDGKSTLIGRLLHDTLQIYEDQLSSLHNDSKRHGTQGEKLDLALLVDGLQAEREQGITIDVAYRYFSTEKRKFIIADTPGHEQYTRNMATGASTCDLAILLIDARKGVLDQTRRHSFISTLLGIKHLVVAINKMDLVDYREETFARIREDYLTFAEQLPGDLDIRFVPLSALEGDNVAAQSANMRWYSGPTLLEVLETVDIQRAVDRQPMRFPVQYVNRPNLDFRGYAGTLASGSVKVGERIKVLPSGVESSVARIVTFDGDKEEACAGEAITLVLNDDIDISRGDLLLAANETLAPARHAAIDVVWMAEQPLAPGQSYDVKLAGKKTRARIEAICYQIDINNLTQRDVESLPLNGIGLVEMTFDEPLALDIYQQNPVTGGLIFIDRLSNVTVGAGMVRELDERGATPSVEYSAFELELNALVRRHFPHWDARDLLGDKHGAA</sequence>
<protein>
    <recommendedName>
        <fullName evidence="2">Sulfate adenylyltransferase subunit 1</fullName>
        <ecNumber evidence="2">2.7.7.4</ecNumber>
    </recommendedName>
    <alternativeName>
        <fullName evidence="2">ATP-sulfurylase large subunit</fullName>
    </alternativeName>
    <alternativeName>
        <fullName evidence="2">Sulfate adenylate transferase</fullName>
        <shortName evidence="2">SAT</shortName>
    </alternativeName>
</protein>